<protein>
    <recommendedName>
        <fullName>Uncharacterized protein AvrBs1.1</fullName>
    </recommendedName>
</protein>
<reference key="1">
    <citation type="journal article" date="1988" name="Mol. Plant Microbe Interact.">
        <title>The avirulence gene avrBs1 from Xanthomonas campestris pv. vesicatoria encodes a 50-kD protein.</title>
        <authorList>
            <person name="Ronald P.C."/>
            <person name="Staskawicz B.J."/>
        </authorList>
    </citation>
    <scope>NUCLEOTIDE SEQUENCE [GENOMIC DNA]</scope>
</reference>
<dbReference type="EMBL" id="M32142">
    <property type="protein sequence ID" value="AAA27593.1"/>
    <property type="molecule type" value="Genomic_DNA"/>
</dbReference>
<dbReference type="SMR" id="P0A0W1"/>
<dbReference type="GO" id="GO:0016787">
    <property type="term" value="F:hydrolase activity"/>
    <property type="evidence" value="ECO:0007669"/>
    <property type="project" value="UniProtKB-KW"/>
</dbReference>
<dbReference type="Gene3D" id="3.90.190.10">
    <property type="entry name" value="Protein tyrosine phosphatase superfamily"/>
    <property type="match status" value="1"/>
</dbReference>
<dbReference type="InterPro" id="IPR029021">
    <property type="entry name" value="Prot-tyrosine_phosphatase-like"/>
</dbReference>
<dbReference type="InterPro" id="IPR016130">
    <property type="entry name" value="Tyr_Pase_AS"/>
</dbReference>
<dbReference type="InterPro" id="IPR000387">
    <property type="entry name" value="Tyr_Pase_dom"/>
</dbReference>
<dbReference type="SUPFAM" id="SSF52799">
    <property type="entry name" value="(Phosphotyrosine protein) phosphatases II"/>
    <property type="match status" value="1"/>
</dbReference>
<dbReference type="PROSITE" id="PS00383">
    <property type="entry name" value="TYR_PHOSPHATASE_1"/>
    <property type="match status" value="1"/>
</dbReference>
<dbReference type="PROSITE" id="PS50056">
    <property type="entry name" value="TYR_PHOSPHATASE_2"/>
    <property type="match status" value="1"/>
</dbReference>
<organism>
    <name type="scientific">Xanthomonas euvesicatoria</name>
    <dbReference type="NCBI Taxonomy" id="456327"/>
    <lineage>
        <taxon>Bacteria</taxon>
        <taxon>Pseudomonadati</taxon>
        <taxon>Pseudomonadota</taxon>
        <taxon>Gammaproteobacteria</taxon>
        <taxon>Lysobacterales</taxon>
        <taxon>Lysobacteraceae</taxon>
        <taxon>Xanthomonas</taxon>
    </lineage>
</organism>
<accession>P0A0W1</accession>
<accession>P19519</accession>
<comment type="miscellaneous">
    <text>This is one of the putative proteins coded by the open reading frames within the region required for AvrBs1 activity.</text>
</comment>
<comment type="similarity">
    <text evidence="2">Belongs to the protein-tyrosine phosphatase family.</text>
</comment>
<sequence length="104" mass="12319">MEREMAHDERLHVHCGMGLGRTTIFIVMHDILRNAAMLSFDDIIERQRKFNPGRSLDNNKDVSDKGRSEFRNERSEFLPLFYEYAKQNPKGQPLLWSEWLDHNA</sequence>
<evidence type="ECO:0000256" key="1">
    <source>
        <dbReference type="SAM" id="MobiDB-lite"/>
    </source>
</evidence>
<evidence type="ECO:0000305" key="2"/>
<keyword id="KW-0378">Hydrolase</keyword>
<keyword id="KW-0614">Plasmid</keyword>
<keyword id="KW-0843">Virulence</keyword>
<feature type="chain" id="PRO_0000094920" description="Uncharacterized protein AvrBs1.1">
    <location>
        <begin position="1"/>
        <end position="104"/>
    </location>
</feature>
<feature type="region of interest" description="Disordered" evidence="1">
    <location>
        <begin position="51"/>
        <end position="70"/>
    </location>
</feature>
<feature type="compositionally biased region" description="Basic and acidic residues" evidence="1">
    <location>
        <begin position="57"/>
        <end position="70"/>
    </location>
</feature>
<name>YAV4_XANEU</name>
<gene>
    <name type="primary">avrBs1.1</name>
</gene>
<geneLocation type="plasmid">
    <name>pXV11</name>
</geneLocation>
<proteinExistence type="inferred from homology"/>